<sequence length="914" mass="105106">MRQKFRFAAYVLAGFGLIFLALTIAGARLYTDWLWFQSVNYQRVFATIIISDLGLRLAVGLTFFVLLFLNLMLTRRPLLKVSQNSAIIREKDVLTIQSSPLSQLITPKLLLLAFIALSALMAFLFNFTVAGDWITFQKFLHPTSFGIKDPVFNLDIGFYVFKLPFYIFIYKVINWVILVSAFWVLAAYFVVYFIQGNPGAIFRNISARYHFSFLAAIFFGLKAAGYQLEQYSLLFSHHGAVWGPGYTATHATLLAYKVLTYIALLCALAILINLFLRRFKLVIYSIGVLLIASVLLGGIYPAAVQKFMVTPNEIAMERPYLERNINFTRLAYNLDEIEKRYFPAGRVLTAEDIRANQDTISNIRLWDWEPLQQTYGQLQEMRLYYEFKDIDVDRYIVNGRYRQVMVAARELNQEHLPAQAKTWVNQRLKFTHGYGIAMSPVNELTGEGLPAFFLKDIPPTGPTDLQVTRPEIYYGEASDQYVIVNTRSQEFDYPKGEENVFSTYEGDGGVRVANFLRRLMFAFSLGDYKLLLSSEVDNNSRVLYYRNIRQRVPKIAPFLQYDNDPYIILSEGKLYWMWDAYTTTDKFPYSEPYNKNDNYIRNAVKVVVDAYTGKVDFYISDSSDPLVLTYSKIFPGMFKPLDSMPEDLRRHIRYPVDLFKTQAKMYAVYHMEDPQVFYNKEDKWNLPTEIYASEEKPMEPYYTVIKLPGENKPEYVLILPFTPQNKKNMIAWLAARSDGENYGKLISYSFPKQELVYGPMQVEARINQDTTISQQLTLWDQGGSRVIRGNLFAVPIKDALLYVEPLYLQAEQSRMPELRRVIVAHGEKVVMEPTLDKALEKIFGEGATVQKSVQQPVDVTQPQPEKSIAELANTANQIYDEAMKKIKAGDWAGYGEDLSRLKQVLAELAERAGK</sequence>
<name>Y1387_PELTS</name>
<dbReference type="EMBL" id="AP009389">
    <property type="protein sequence ID" value="BAF59568.1"/>
    <property type="molecule type" value="Genomic_DNA"/>
</dbReference>
<dbReference type="SMR" id="A5D2F6"/>
<dbReference type="STRING" id="370438.PTH_1387"/>
<dbReference type="KEGG" id="pth:PTH_1387"/>
<dbReference type="eggNOG" id="COG1615">
    <property type="taxonomic scope" value="Bacteria"/>
</dbReference>
<dbReference type="HOGENOM" id="CLU_007733_0_0_9"/>
<dbReference type="Proteomes" id="UP000006556">
    <property type="component" value="Chromosome"/>
</dbReference>
<dbReference type="GO" id="GO:0005576">
    <property type="term" value="C:extracellular region"/>
    <property type="evidence" value="ECO:0007669"/>
    <property type="project" value="TreeGrafter"/>
</dbReference>
<dbReference type="GO" id="GO:0005886">
    <property type="term" value="C:plasma membrane"/>
    <property type="evidence" value="ECO:0007669"/>
    <property type="project" value="UniProtKB-SubCell"/>
</dbReference>
<dbReference type="HAMAP" id="MF_01600">
    <property type="entry name" value="UPF0182"/>
    <property type="match status" value="1"/>
</dbReference>
<dbReference type="InterPro" id="IPR005372">
    <property type="entry name" value="UPF0182"/>
</dbReference>
<dbReference type="PANTHER" id="PTHR39344">
    <property type="entry name" value="UPF0182 PROTEIN SLL1060"/>
    <property type="match status" value="1"/>
</dbReference>
<dbReference type="PANTHER" id="PTHR39344:SF1">
    <property type="entry name" value="UPF0182 PROTEIN SLL1060"/>
    <property type="match status" value="1"/>
</dbReference>
<dbReference type="Pfam" id="PF03699">
    <property type="entry name" value="UPF0182"/>
    <property type="match status" value="1"/>
</dbReference>
<evidence type="ECO:0000255" key="1">
    <source>
        <dbReference type="HAMAP-Rule" id="MF_01600"/>
    </source>
</evidence>
<reference key="1">
    <citation type="journal article" date="2008" name="Genome Res.">
        <title>The genome of Pelotomaculum thermopropionicum reveals niche-associated evolution in anaerobic microbiota.</title>
        <authorList>
            <person name="Kosaka T."/>
            <person name="Kato S."/>
            <person name="Shimoyama T."/>
            <person name="Ishii S."/>
            <person name="Abe T."/>
            <person name="Watanabe K."/>
        </authorList>
    </citation>
    <scope>NUCLEOTIDE SEQUENCE [LARGE SCALE GENOMIC DNA]</scope>
    <source>
        <strain>DSM 13744 / JCM 10971 / SI</strain>
    </source>
</reference>
<feature type="chain" id="PRO_1000088009" description="UPF0182 protein PTH_1387">
    <location>
        <begin position="1"/>
        <end position="914"/>
    </location>
</feature>
<feature type="transmembrane region" description="Helical" evidence="1">
    <location>
        <begin position="7"/>
        <end position="27"/>
    </location>
</feature>
<feature type="transmembrane region" description="Helical" evidence="1">
    <location>
        <begin position="48"/>
        <end position="68"/>
    </location>
</feature>
<feature type="transmembrane region" description="Helical" evidence="1">
    <location>
        <begin position="109"/>
        <end position="129"/>
    </location>
</feature>
<feature type="transmembrane region" description="Helical" evidence="1">
    <location>
        <begin position="173"/>
        <end position="193"/>
    </location>
</feature>
<feature type="transmembrane region" description="Helical" evidence="1">
    <location>
        <begin position="209"/>
        <end position="229"/>
    </location>
</feature>
<feature type="transmembrane region" description="Helical" evidence="1">
    <location>
        <begin position="252"/>
        <end position="272"/>
    </location>
</feature>
<feature type="transmembrane region" description="Helical" evidence="1">
    <location>
        <begin position="281"/>
        <end position="301"/>
    </location>
</feature>
<protein>
    <recommendedName>
        <fullName evidence="1">UPF0182 protein PTH_1387</fullName>
    </recommendedName>
</protein>
<comment type="subcellular location">
    <subcellularLocation>
        <location evidence="1">Cell membrane</location>
        <topology evidence="1">Multi-pass membrane protein</topology>
    </subcellularLocation>
</comment>
<comment type="similarity">
    <text evidence="1">Belongs to the UPF0182 family.</text>
</comment>
<organism>
    <name type="scientific">Pelotomaculum thermopropionicum (strain DSM 13744 / JCM 10971 / SI)</name>
    <dbReference type="NCBI Taxonomy" id="370438"/>
    <lineage>
        <taxon>Bacteria</taxon>
        <taxon>Bacillati</taxon>
        <taxon>Bacillota</taxon>
        <taxon>Clostridia</taxon>
        <taxon>Eubacteriales</taxon>
        <taxon>Desulfotomaculaceae</taxon>
        <taxon>Pelotomaculum</taxon>
    </lineage>
</organism>
<proteinExistence type="inferred from homology"/>
<accession>A5D2F6</accession>
<gene>
    <name type="ordered locus">PTH_1387</name>
</gene>
<keyword id="KW-1003">Cell membrane</keyword>
<keyword id="KW-0472">Membrane</keyword>
<keyword id="KW-1185">Reference proteome</keyword>
<keyword id="KW-0812">Transmembrane</keyword>
<keyword id="KW-1133">Transmembrane helix</keyword>